<sequence>MKSIIIASLVALAIAASPALDRTFSPKSEYVYKFDGLLLSGLPTTFSDASQTLISCRTRLQAVDDRYIHLQLIDIQYSASHIPQSEQWPKIESLEQRELSDELKELLELPFRAQIRNGLVSEIQFSSEDAEWSKNAKRSILNLFSLRKSAPVDEMSQDQKDMESDKDSLFFNVHEKTMEGDCEVAYTIVQEGGKTIYTKSVNFDKCITRPETAYGLRFGSECKECEKEGQFVQPQTVYTYTFKNEKLQESEVNSIYTLNVNGQEVVKSETRAKVTFVEESKINREIKKVSGPKEEIVYSMENEKLIEQFYKQGDKAEVNPFKAIEIEQKVEQLEEIFRQIQEHEQNTPETVHLIARAVRMFRMCTIEELKKVHTTIYTKAEKKVQLVIETTLAVAGTKNTIQHLIHHFEKKSITPLRAAELLKSVQETLYPSEHIADLLIQLAQSPLSEKYEPLRQSAWLAAGSVVRGFASKTQDLPLIRPASRQTKEKYVRVFMQHFRNADSTYEKVLALKTLGNAGIDLSVYELVQLIQDPRQPLSIRTEAVDALRLLKDVMPRKIQKVLLPVYKNRQNKPELRMAALWRMMHTIPEEPVLAHIVSQMENESNQHVAAFTYNVLRQFSKSTNPCYQQLAVRCSKVLLFTRYQPQEQMLSTYSQLPLFNSEWLSGVQFDFATIFEKNAFLPKEVQASFETVFGGNWNKYFAQVGFSQQNFEQVILKTLEKLSLYGKQSDELRSRRVQSGIQMLQEIVKKMNIRPRVQQTDSQNAHAVFYLRYKEMDYIVLPIDMETIDNVVEKYVRNGEFDIKSLLTFLTNDSKFELHRALFFYEAERRIPTTIGMPLTISGKMPTILSINGKVSIELEKLGARLVLDIVPTVATTHVTEMRFWYPVIEQGVKSLQSARLHTPLRFESTVELKKNTLEITHKFVVPENKKTTVSVHTRPVAFIRVPKNQDSEYVEAEEKTISHSQYQMSTEEIDRQYETFGLRINAQGNVLSQWTLPMVLMTEQDFEFTLENKNRPVEFTARVTIGNLEKTDLSEIKFDKIFEKEFDLENNESENRRQYFHKMIREIQSEQGFKNLITLKLEAPQQMYWNTELRTVCDKWIRMCKVEMDARRSPIEHENKEWTLRTELLAARPQMPSSLRQLREQPHREVQLALNAKWGSSKKSEITFNAQLEQSTEQKKFLRNIEREYKGIPEYELLIKAARLNQVNVVSEYKLTPESEYTFSRIFDLIKAYNFWTVSEKRVQNEDRRVVLQLSVEPLSRQYMNMTIQTPEQEVELKNVRIPRVVLPTIARRAMFQQTWEKTGATCKVDQSEVSTFDNVIYRAPLTTCYSLVAKDCSEQPRFAVLAKKINKNSEELLVKVVRREEEIVVKKSDDKFLVKVDGKKVNPTELEQYNIEILGDNLIVIRLPHGEVRFDGYTVKTNMPSVASQNQLCGLCGNNDGERDNEFMTADNYETEDVEEFHRSYLLKNEECEVEKDRISEKKNYKNKWNREEKKSDYESSSDYESNYDEKETEKELVKKTLIKEFSNRVCFSIEPVSECRRGLESEKTSNKKIRFTCMPRHSKNARRFLKEAREQTVADLVDFPVSFVESVKIPTACVAY</sequence>
<evidence type="ECO:0000255" key="1"/>
<evidence type="ECO:0000255" key="2">
    <source>
        <dbReference type="PROSITE-ProRule" id="PRU00557"/>
    </source>
</evidence>
<evidence type="ECO:0000255" key="3">
    <source>
        <dbReference type="PROSITE-ProRule" id="PRU00580"/>
    </source>
</evidence>
<evidence type="ECO:0000269" key="4">
    <source>
    </source>
</evidence>
<evidence type="ECO:0000269" key="5">
    <source>
    </source>
</evidence>
<evidence type="ECO:0000269" key="6">
    <source>
    </source>
</evidence>
<evidence type="ECO:0000305" key="7"/>
<evidence type="ECO:0000305" key="8">
    <source>
    </source>
</evidence>
<protein>
    <recommendedName>
        <fullName>Vitellogenin-4</fullName>
    </recommendedName>
</protein>
<organism>
    <name type="scientific">Caenorhabditis elegans</name>
    <dbReference type="NCBI Taxonomy" id="6239"/>
    <lineage>
        <taxon>Eukaryota</taxon>
        <taxon>Metazoa</taxon>
        <taxon>Ecdysozoa</taxon>
        <taxon>Nematoda</taxon>
        <taxon>Chromadorea</taxon>
        <taxon>Rhabditida</taxon>
        <taxon>Rhabditina</taxon>
        <taxon>Rhabditomorpha</taxon>
        <taxon>Rhabditoidea</taxon>
        <taxon>Rhabditidae</taxon>
        <taxon>Peloderinae</taxon>
        <taxon>Caenorhabditis</taxon>
    </lineage>
</organism>
<accession>P18947</accession>
<accession>Q9BPP3</accession>
<feature type="signal peptide" evidence="1">
    <location>
        <begin position="1"/>
        <end position="15"/>
    </location>
</feature>
<feature type="chain" id="PRO_0000041535" description="Vitellogenin-4">
    <location>
        <begin position="16"/>
        <end position="1603"/>
    </location>
</feature>
<feature type="domain" description="Vitellogenin" evidence="2">
    <location>
        <begin position="24"/>
        <end position="685"/>
    </location>
</feature>
<feature type="domain" description="VWFD" evidence="3">
    <location>
        <begin position="1306"/>
        <end position="1475"/>
    </location>
</feature>
<feature type="glycosylation site" description="N-linked (GlcNAc...) asparagine" evidence="4 5">
    <location>
        <position position="1266"/>
    </location>
</feature>
<feature type="disulfide bond" evidence="3">
    <location>
        <begin position="1308"/>
        <end position="1438"/>
    </location>
</feature>
<feature type="disulfide bond" evidence="3">
    <location>
        <begin position="1330"/>
        <end position="1474"/>
    </location>
</feature>
<feature type="sequence conflict" description="In Ref. 2; AAA28163." evidence="7" ref="2">
    <original>L</original>
    <variation>V</variation>
    <location>
        <position position="169"/>
    </location>
</feature>
<feature type="sequence conflict" description="In Ref. 2; AAA28163." evidence="7" ref="2">
    <original>EVAYT</original>
    <variation>RSRLH</variation>
    <location>
        <begin position="183"/>
        <end position="187"/>
    </location>
</feature>
<feature type="sequence conflict" description="In Ref. 2; AAA28163." evidence="7" ref="2">
    <original>T</original>
    <variation>S</variation>
    <location>
        <position position="275"/>
    </location>
</feature>
<comment type="function">
    <text evidence="6 7">Precursor of the egg-yolk proteins that are sources of nutrients during embryonic development (Probable). Together with other vitellogenins, may play a role in modulating life-span, acting via induction of autophagy and lysosomal lipolysis (PubMed:26671266).</text>
</comment>
<comment type="subcellular location">
    <subcellularLocation>
        <location evidence="8">Secreted</location>
    </subcellularLocation>
</comment>
<comment type="tissue specificity">
    <text evidence="8">Expressed in the intestine of adult hermaphrodites.</text>
</comment>
<comment type="disruption phenotype">
    <text evidence="6">Simultaneous RNAi-mediated knockdown of vitellogenins vit-1, vit-2, vit-3, vit-4 and vit-5 increases life span, causes accumulation of neutral lipid and an increase in lgg-1 foci in the proximal intestine; however, does not affect fertility or pharyngeal pumping rates (PubMed:26671266). Expression of transcription factors pha-4 and daf-16 are increased (PubMed:26671266).</text>
</comment>
<comment type="caution">
    <text evidence="8">High sequence similarity with other vitellogenin genes means that assigning functions to individual proteins is difficult; authors sometimes refer to VITs or vitellogenins.</text>
</comment>
<gene>
    <name type="primary">vit-4</name>
    <name type="ORF">F59D8.2</name>
</gene>
<keyword id="KW-1015">Disulfide bond</keyword>
<keyword id="KW-0325">Glycoprotein</keyword>
<keyword id="KW-1185">Reference proteome</keyword>
<keyword id="KW-0964">Secreted</keyword>
<keyword id="KW-0732">Signal</keyword>
<keyword id="KW-0758">Storage protein</keyword>
<name>VIT4_CAEEL</name>
<dbReference type="EMBL" id="FO081486">
    <property type="protein sequence ID" value="CCD71958.1"/>
    <property type="molecule type" value="Genomic_DNA"/>
</dbReference>
<dbReference type="EMBL" id="M11498">
    <property type="protein sequence ID" value="AAA28163.1"/>
    <property type="molecule type" value="Genomic_DNA"/>
</dbReference>
<dbReference type="EMBL" id="X02754">
    <property type="protein sequence ID" value="CAA26531.1"/>
    <property type="molecule type" value="Genomic_DNA"/>
</dbReference>
<dbReference type="PIR" id="A43084">
    <property type="entry name" value="A43084"/>
</dbReference>
<dbReference type="RefSeq" id="NP_508612.1">
    <property type="nucleotide sequence ID" value="NM_076211.8"/>
</dbReference>
<dbReference type="SMR" id="P18947"/>
<dbReference type="BioGRID" id="45584">
    <property type="interactions" value="18"/>
</dbReference>
<dbReference type="FunCoup" id="P18947">
    <property type="interactions" value="439"/>
</dbReference>
<dbReference type="STRING" id="6239.F59D8.2.1"/>
<dbReference type="GlyCosmos" id="P18947">
    <property type="glycosylation" value="1 site, No reported glycans"/>
</dbReference>
<dbReference type="iPTMnet" id="P18947"/>
<dbReference type="PaxDb" id="6239-F59D8.2"/>
<dbReference type="PeptideAtlas" id="P18947"/>
<dbReference type="EnsemblMetazoa" id="F59D8.2.1">
    <property type="protein sequence ID" value="F59D8.2.1"/>
    <property type="gene ID" value="WBGene00006928"/>
</dbReference>
<dbReference type="GeneID" id="180646"/>
<dbReference type="KEGG" id="cel:CELE_F59D8.2"/>
<dbReference type="UCSC" id="F59D8.2">
    <property type="organism name" value="c. elegans"/>
</dbReference>
<dbReference type="AGR" id="WB:WBGene00006928"/>
<dbReference type="CTD" id="180646"/>
<dbReference type="WormBase" id="F59D8.2">
    <property type="protein sequence ID" value="CE26817"/>
    <property type="gene ID" value="WBGene00006928"/>
    <property type="gene designation" value="vit-4"/>
</dbReference>
<dbReference type="eggNOG" id="KOG4338">
    <property type="taxonomic scope" value="Eukaryota"/>
</dbReference>
<dbReference type="GeneTree" id="ENSGT00530000064273"/>
<dbReference type="HOGENOM" id="CLU_003821_0_0_1"/>
<dbReference type="InParanoid" id="P18947"/>
<dbReference type="OMA" id="RKWLIEA"/>
<dbReference type="OrthoDB" id="5825149at2759"/>
<dbReference type="PhylomeDB" id="P18947"/>
<dbReference type="PRO" id="PR:P18947"/>
<dbReference type="Proteomes" id="UP000001940">
    <property type="component" value="Chromosome X"/>
</dbReference>
<dbReference type="Bgee" id="WBGene00006928">
    <property type="expression patterns" value="Expressed in adult organism and 1 other cell type or tissue"/>
</dbReference>
<dbReference type="GO" id="GO:0005576">
    <property type="term" value="C:extracellular region"/>
    <property type="evidence" value="ECO:0007669"/>
    <property type="project" value="UniProtKB-SubCell"/>
</dbReference>
<dbReference type="GO" id="GO:0005319">
    <property type="term" value="F:lipid transporter activity"/>
    <property type="evidence" value="ECO:0000318"/>
    <property type="project" value="GO_Central"/>
</dbReference>
<dbReference type="GO" id="GO:0045735">
    <property type="term" value="F:nutrient reservoir activity"/>
    <property type="evidence" value="ECO:0007669"/>
    <property type="project" value="UniProtKB-KW"/>
</dbReference>
<dbReference type="FunFam" id="1.25.10.20:FF:000003">
    <property type="entry name" value="Vitellogenin C"/>
    <property type="match status" value="1"/>
</dbReference>
<dbReference type="FunFam" id="2.20.80.10:FF:000004">
    <property type="entry name" value="Vitellogenin-3"/>
    <property type="match status" value="1"/>
</dbReference>
<dbReference type="Gene3D" id="2.30.230.10">
    <property type="entry name" value="Lipovitellin, beta-sheet shell regions, chain A"/>
    <property type="match status" value="1"/>
</dbReference>
<dbReference type="Gene3D" id="2.20.80.10">
    <property type="entry name" value="Lipovitellin-phosvitin complex, chain A, domain 4"/>
    <property type="match status" value="1"/>
</dbReference>
<dbReference type="Gene3D" id="1.25.10.20">
    <property type="entry name" value="Vitellinogen, superhelical"/>
    <property type="match status" value="1"/>
</dbReference>
<dbReference type="InterPro" id="IPR015819">
    <property type="entry name" value="Lipid_transp_b-sht_shell"/>
</dbReference>
<dbReference type="InterPro" id="IPR011030">
    <property type="entry name" value="Lipovitellin_superhlx_dom"/>
</dbReference>
<dbReference type="InterPro" id="IPR015816">
    <property type="entry name" value="Vitellinogen_b-sht_N"/>
</dbReference>
<dbReference type="InterPro" id="IPR015255">
    <property type="entry name" value="Vitellinogen_open_b-sht"/>
</dbReference>
<dbReference type="InterPro" id="IPR050733">
    <property type="entry name" value="Vitellogenin/Apolipophorin"/>
</dbReference>
<dbReference type="InterPro" id="IPR001747">
    <property type="entry name" value="Vitellogenin_N"/>
</dbReference>
<dbReference type="InterPro" id="IPR001846">
    <property type="entry name" value="VWF_type-D"/>
</dbReference>
<dbReference type="PANTHER" id="PTHR23345:SF8">
    <property type="entry name" value="VITELLOGENIN-3-RELATED"/>
    <property type="match status" value="1"/>
</dbReference>
<dbReference type="PANTHER" id="PTHR23345">
    <property type="entry name" value="VITELLOGENIN-RELATED"/>
    <property type="match status" value="1"/>
</dbReference>
<dbReference type="Pfam" id="PF09172">
    <property type="entry name" value="Vit_open_b-sht"/>
    <property type="match status" value="1"/>
</dbReference>
<dbReference type="Pfam" id="PF01347">
    <property type="entry name" value="Vitellogenin_N"/>
    <property type="match status" value="1"/>
</dbReference>
<dbReference type="Pfam" id="PF00094">
    <property type="entry name" value="VWD"/>
    <property type="match status" value="1"/>
</dbReference>
<dbReference type="SMART" id="SM01169">
    <property type="entry name" value="DUF1943"/>
    <property type="match status" value="1"/>
</dbReference>
<dbReference type="SMART" id="SM00638">
    <property type="entry name" value="LPD_N"/>
    <property type="match status" value="1"/>
</dbReference>
<dbReference type="SMART" id="SM00216">
    <property type="entry name" value="VWD"/>
    <property type="match status" value="1"/>
</dbReference>
<dbReference type="SUPFAM" id="SSF56968">
    <property type="entry name" value="Lipovitellin-phosvitin complex, beta-sheet shell regions"/>
    <property type="match status" value="2"/>
</dbReference>
<dbReference type="SUPFAM" id="SSF48431">
    <property type="entry name" value="Lipovitellin-phosvitin complex, superhelical domain"/>
    <property type="match status" value="1"/>
</dbReference>
<dbReference type="PROSITE" id="PS51211">
    <property type="entry name" value="VITELLOGENIN"/>
    <property type="match status" value="1"/>
</dbReference>
<dbReference type="PROSITE" id="PS51233">
    <property type="entry name" value="VWFD"/>
    <property type="match status" value="1"/>
</dbReference>
<proteinExistence type="evidence at protein level"/>
<reference key="1">
    <citation type="journal article" date="1998" name="Science">
        <title>Genome sequence of the nematode C. elegans: a platform for investigating biology.</title>
        <authorList>
            <consortium name="The C. elegans sequencing consortium"/>
        </authorList>
    </citation>
    <scope>NUCLEOTIDE SEQUENCE [LARGE SCALE GENOMIC DNA]</scope>
    <source>
        <strain>Bristol N2</strain>
    </source>
</reference>
<reference key="2">
    <citation type="submission" date="1986-11" db="EMBL/GenBank/DDBJ databases">
        <authorList>
            <person name="Blumenthal T."/>
            <person name="Spieth J."/>
            <person name="Zucker E."/>
        </authorList>
    </citation>
    <scope>NUCLEOTIDE SEQUENCE [GENOMIC DNA] OF 1-282</scope>
</reference>
<reference key="3">
    <citation type="journal article" date="1985" name="Nucleic Acids Res.">
        <title>The C. elegans vitellogenin genes: short sequence repeats in the promoter regions and homology to the vertebrate genes.</title>
        <authorList>
            <person name="Spieth J."/>
            <person name="Denison K."/>
            <person name="Kirtland S."/>
            <person name="Cane J."/>
            <person name="Blumenthal T."/>
        </authorList>
    </citation>
    <scope>NUCLEOTIDE SEQUENCE [GENOMIC DNA] OF 1-24</scope>
</reference>
<reference key="4">
    <citation type="journal article" date="2003" name="Nat. Biotechnol.">
        <title>Lectin affinity capture, isotope-coded tagging and mass spectrometry to identify N-linked glycoproteins.</title>
        <authorList>
            <person name="Kaji H."/>
            <person name="Saito H."/>
            <person name="Yamauchi Y."/>
            <person name="Shinkawa T."/>
            <person name="Taoka M."/>
            <person name="Hirabayashi J."/>
            <person name="Kasai K."/>
            <person name="Takahashi N."/>
            <person name="Isobe T."/>
        </authorList>
    </citation>
    <scope>GLYCOSYLATION [LARGE SCALE ANALYSIS] AT ASN-1266</scope>
    <scope>IDENTIFICATION BY MASS SPECTROMETRY</scope>
    <source>
        <strain>Bristol N2</strain>
    </source>
</reference>
<reference key="5">
    <citation type="journal article" date="2007" name="Mol. Cell. Proteomics">
        <title>Proteomics reveals N-linked glycoprotein diversity in Caenorhabditis elegans and suggests an atypical translocation mechanism for integral membrane proteins.</title>
        <authorList>
            <person name="Kaji H."/>
            <person name="Kamiie J."/>
            <person name="Kawakami H."/>
            <person name="Kido K."/>
            <person name="Yamauchi Y."/>
            <person name="Shinkawa T."/>
            <person name="Taoka M."/>
            <person name="Takahashi N."/>
            <person name="Isobe T."/>
        </authorList>
    </citation>
    <scope>GLYCOSYLATION [LARGE SCALE ANALYSIS] AT ASN-1266</scope>
    <scope>IDENTIFICATION BY MASS SPECTROMETRY</scope>
    <source>
        <strain>Bristol N2</strain>
    </source>
</reference>
<reference key="6">
    <citation type="journal article" date="2016" name="Autophagy">
        <title>Autophagy-mediated longevity is modulated by lipoprotein biogenesis.</title>
        <authorList>
            <person name="Seah N.E."/>
            <person name="de Magalhaes Filho C.D."/>
            <person name="Petrashen A.P."/>
            <person name="Henderson H.R."/>
            <person name="Laguer J."/>
            <person name="Gonzalez J."/>
            <person name="Dillin A."/>
            <person name="Hansen M."/>
            <person name="Lapierre L.R."/>
        </authorList>
    </citation>
    <scope>FUNCTION</scope>
    <scope>SUBCELLULAR LOCATION</scope>
    <scope>TISSUE SPECIFICITY</scope>
    <scope>DISRUPTION PHENOTYPE</scope>
</reference>